<sequence>MAHKKAGGSTRNGRDSESKRLGVKRFGGESVLAGNIIVRQRGTKFHAGNNVGIGKDHTLFALTEGKVKFEVKGPKNRKFVSIEAE</sequence>
<gene>
    <name evidence="1" type="primary">rpmA</name>
    <name type="ordered locus">VIBHAR_00801</name>
</gene>
<evidence type="ECO:0000255" key="1">
    <source>
        <dbReference type="HAMAP-Rule" id="MF_00539"/>
    </source>
</evidence>
<evidence type="ECO:0000256" key="2">
    <source>
        <dbReference type="SAM" id="MobiDB-lite"/>
    </source>
</evidence>
<evidence type="ECO:0000305" key="3"/>
<organism>
    <name type="scientific">Vibrio campbellii (strain ATCC BAA-1116)</name>
    <dbReference type="NCBI Taxonomy" id="2902295"/>
    <lineage>
        <taxon>Bacteria</taxon>
        <taxon>Pseudomonadati</taxon>
        <taxon>Pseudomonadota</taxon>
        <taxon>Gammaproteobacteria</taxon>
        <taxon>Vibrionales</taxon>
        <taxon>Vibrionaceae</taxon>
        <taxon>Vibrio</taxon>
    </lineage>
</organism>
<name>RL27_VIBC1</name>
<dbReference type="EMBL" id="CP000789">
    <property type="protein sequence ID" value="ABU69802.1"/>
    <property type="molecule type" value="Genomic_DNA"/>
</dbReference>
<dbReference type="RefSeq" id="WP_005383095.1">
    <property type="nucleotide sequence ID" value="NC_022269.1"/>
</dbReference>
<dbReference type="SMR" id="A7N0G1"/>
<dbReference type="GeneID" id="83583055"/>
<dbReference type="KEGG" id="vha:VIBHAR_00801"/>
<dbReference type="PATRIC" id="fig|338187.25.peg.1814"/>
<dbReference type="Proteomes" id="UP000008152">
    <property type="component" value="Chromosome I"/>
</dbReference>
<dbReference type="GO" id="GO:0022625">
    <property type="term" value="C:cytosolic large ribosomal subunit"/>
    <property type="evidence" value="ECO:0007669"/>
    <property type="project" value="TreeGrafter"/>
</dbReference>
<dbReference type="GO" id="GO:0003735">
    <property type="term" value="F:structural constituent of ribosome"/>
    <property type="evidence" value="ECO:0007669"/>
    <property type="project" value="InterPro"/>
</dbReference>
<dbReference type="GO" id="GO:0006412">
    <property type="term" value="P:translation"/>
    <property type="evidence" value="ECO:0007669"/>
    <property type="project" value="UniProtKB-UniRule"/>
</dbReference>
<dbReference type="FunFam" id="2.40.50.100:FF:000001">
    <property type="entry name" value="50S ribosomal protein L27"/>
    <property type="match status" value="1"/>
</dbReference>
<dbReference type="Gene3D" id="2.40.50.100">
    <property type="match status" value="1"/>
</dbReference>
<dbReference type="HAMAP" id="MF_00539">
    <property type="entry name" value="Ribosomal_bL27"/>
    <property type="match status" value="1"/>
</dbReference>
<dbReference type="InterPro" id="IPR001684">
    <property type="entry name" value="Ribosomal_bL27"/>
</dbReference>
<dbReference type="InterPro" id="IPR018261">
    <property type="entry name" value="Ribosomal_bL27_CS"/>
</dbReference>
<dbReference type="NCBIfam" id="TIGR00062">
    <property type="entry name" value="L27"/>
    <property type="match status" value="1"/>
</dbReference>
<dbReference type="PANTHER" id="PTHR15893:SF0">
    <property type="entry name" value="LARGE RIBOSOMAL SUBUNIT PROTEIN BL27M"/>
    <property type="match status" value="1"/>
</dbReference>
<dbReference type="PANTHER" id="PTHR15893">
    <property type="entry name" value="RIBOSOMAL PROTEIN L27"/>
    <property type="match status" value="1"/>
</dbReference>
<dbReference type="Pfam" id="PF01016">
    <property type="entry name" value="Ribosomal_L27"/>
    <property type="match status" value="1"/>
</dbReference>
<dbReference type="PRINTS" id="PR00063">
    <property type="entry name" value="RIBOSOMALL27"/>
</dbReference>
<dbReference type="SUPFAM" id="SSF110324">
    <property type="entry name" value="Ribosomal L27 protein-like"/>
    <property type="match status" value="1"/>
</dbReference>
<dbReference type="PROSITE" id="PS00831">
    <property type="entry name" value="RIBOSOMAL_L27"/>
    <property type="match status" value="1"/>
</dbReference>
<accession>A7N0G1</accession>
<keyword id="KW-0687">Ribonucleoprotein</keyword>
<keyword id="KW-0689">Ribosomal protein</keyword>
<reference key="1">
    <citation type="submission" date="2007-08" db="EMBL/GenBank/DDBJ databases">
        <authorList>
            <consortium name="The Vibrio harveyi Genome Sequencing Project"/>
            <person name="Bassler B."/>
            <person name="Clifton S.W."/>
            <person name="Fulton L."/>
            <person name="Delehaunty K."/>
            <person name="Fronick C."/>
            <person name="Harrison M."/>
            <person name="Markivic C."/>
            <person name="Fulton R."/>
            <person name="Tin-Wollam A.-M."/>
            <person name="Shah N."/>
            <person name="Pepin K."/>
            <person name="Nash W."/>
            <person name="Thiruvilangam P."/>
            <person name="Bhonagiri V."/>
            <person name="Waters C."/>
            <person name="Tu K.C."/>
            <person name="Irgon J."/>
            <person name="Wilson R.K."/>
        </authorList>
    </citation>
    <scope>NUCLEOTIDE SEQUENCE [LARGE SCALE GENOMIC DNA]</scope>
    <source>
        <strain>ATCC BAA-1116 / BB120</strain>
    </source>
</reference>
<comment type="similarity">
    <text evidence="1">Belongs to the bacterial ribosomal protein bL27 family.</text>
</comment>
<feature type="chain" id="PRO_1000017645" description="Large ribosomal subunit protein bL27">
    <location>
        <begin position="1"/>
        <end position="85"/>
    </location>
</feature>
<feature type="region of interest" description="Disordered" evidence="2">
    <location>
        <begin position="1"/>
        <end position="22"/>
    </location>
</feature>
<protein>
    <recommendedName>
        <fullName evidence="1">Large ribosomal subunit protein bL27</fullName>
    </recommendedName>
    <alternativeName>
        <fullName evidence="3">50S ribosomal protein L27</fullName>
    </alternativeName>
</protein>
<proteinExistence type="inferred from homology"/>